<evidence type="ECO:0000255" key="1">
    <source>
        <dbReference type="HAMAP-Rule" id="MF_01434"/>
    </source>
</evidence>
<evidence type="ECO:0000256" key="2">
    <source>
        <dbReference type="SAM" id="MobiDB-lite"/>
    </source>
</evidence>
<organism>
    <name type="scientific">Staphylococcus haemolyticus (strain JCSC1435)</name>
    <dbReference type="NCBI Taxonomy" id="279808"/>
    <lineage>
        <taxon>Bacteria</taxon>
        <taxon>Bacillati</taxon>
        <taxon>Bacillota</taxon>
        <taxon>Bacilli</taxon>
        <taxon>Bacillales</taxon>
        <taxon>Staphylococcaceae</taxon>
        <taxon>Staphylococcus</taxon>
    </lineage>
</organism>
<sequence>MKRSQRMNNSPERHSQYRNEPHYNTYYQPVGKPPKKKKNKRIFLRLFIIFVFIYALFIGLMYYLSSRANVDDLKTIENKSSYVSADNMPDYVKGAFISMEDERFYKHHGFDVKGTTRALFSTIGDRDVQGGSTITQQTVKNYYYDNERSFTRKLKELFVAHKVEQQYSKNEILSFYLNNIYYGSDQYTIESAANYYFGTTVNKNSDSMSQITVLQSAILASKVNAPSVYDISNMSDNFKNRIKTNLEKMKQQEYISDSQYQEALSQLNNY</sequence>
<reference key="1">
    <citation type="journal article" date="2005" name="J. Bacteriol.">
        <title>Whole-genome sequencing of Staphylococcus haemolyticus uncovers the extreme plasticity of its genome and the evolution of human-colonizing staphylococcal species.</title>
        <authorList>
            <person name="Takeuchi F."/>
            <person name="Watanabe S."/>
            <person name="Baba T."/>
            <person name="Yuzawa H."/>
            <person name="Ito T."/>
            <person name="Morimoto Y."/>
            <person name="Kuroda M."/>
            <person name="Cui L."/>
            <person name="Takahashi M."/>
            <person name="Ankai A."/>
            <person name="Baba S."/>
            <person name="Fukui S."/>
            <person name="Lee J.C."/>
            <person name="Hiramatsu K."/>
        </authorList>
    </citation>
    <scope>NUCLEOTIDE SEQUENCE [LARGE SCALE GENOMIC DNA]</scope>
    <source>
        <strain>JCSC1435</strain>
    </source>
</reference>
<dbReference type="EC" id="2.4.99.28" evidence="1"/>
<dbReference type="EMBL" id="AP006716">
    <property type="protein sequence ID" value="BAE04395.1"/>
    <property type="molecule type" value="Genomic_DNA"/>
</dbReference>
<dbReference type="RefSeq" id="WP_011275389.1">
    <property type="nucleotide sequence ID" value="NC_007168.1"/>
</dbReference>
<dbReference type="SMR" id="Q4L7I0"/>
<dbReference type="CAZy" id="GT51">
    <property type="family name" value="Glycosyltransferase Family 51"/>
</dbReference>
<dbReference type="KEGG" id="sha:SH1086"/>
<dbReference type="eggNOG" id="COG0744">
    <property type="taxonomic scope" value="Bacteria"/>
</dbReference>
<dbReference type="HOGENOM" id="CLU_006354_1_2_9"/>
<dbReference type="OrthoDB" id="9766909at2"/>
<dbReference type="UniPathway" id="UPA00219"/>
<dbReference type="Proteomes" id="UP000000543">
    <property type="component" value="Chromosome"/>
</dbReference>
<dbReference type="GO" id="GO:0030288">
    <property type="term" value="C:outer membrane-bounded periplasmic space"/>
    <property type="evidence" value="ECO:0007669"/>
    <property type="project" value="TreeGrafter"/>
</dbReference>
<dbReference type="GO" id="GO:0005886">
    <property type="term" value="C:plasma membrane"/>
    <property type="evidence" value="ECO:0007669"/>
    <property type="project" value="UniProtKB-SubCell"/>
</dbReference>
<dbReference type="GO" id="GO:0008955">
    <property type="term" value="F:peptidoglycan glycosyltransferase activity"/>
    <property type="evidence" value="ECO:0007669"/>
    <property type="project" value="UniProtKB-UniRule"/>
</dbReference>
<dbReference type="GO" id="GO:0071555">
    <property type="term" value="P:cell wall organization"/>
    <property type="evidence" value="ECO:0007669"/>
    <property type="project" value="UniProtKB-KW"/>
</dbReference>
<dbReference type="GO" id="GO:0009252">
    <property type="term" value="P:peptidoglycan biosynthetic process"/>
    <property type="evidence" value="ECO:0007669"/>
    <property type="project" value="UniProtKB-UniRule"/>
</dbReference>
<dbReference type="GO" id="GO:0008360">
    <property type="term" value="P:regulation of cell shape"/>
    <property type="evidence" value="ECO:0007669"/>
    <property type="project" value="UniProtKB-KW"/>
</dbReference>
<dbReference type="Gene3D" id="1.10.3810.10">
    <property type="entry name" value="Biosynthetic peptidoglycan transglycosylase-like"/>
    <property type="match status" value="1"/>
</dbReference>
<dbReference type="HAMAP" id="MF_01434">
    <property type="entry name" value="MGT"/>
    <property type="match status" value="1"/>
</dbReference>
<dbReference type="InterPro" id="IPR001264">
    <property type="entry name" value="Glyco_trans_51"/>
</dbReference>
<dbReference type="InterPro" id="IPR050396">
    <property type="entry name" value="Glycosyltr_51/Transpeptidase"/>
</dbReference>
<dbReference type="InterPro" id="IPR023346">
    <property type="entry name" value="Lysozyme-like_dom_sf"/>
</dbReference>
<dbReference type="InterPro" id="IPR022978">
    <property type="entry name" value="Monofunct_glyco_trans"/>
</dbReference>
<dbReference type="InterPro" id="IPR036950">
    <property type="entry name" value="PBP_transglycosylase"/>
</dbReference>
<dbReference type="NCBIfam" id="NF010008">
    <property type="entry name" value="PRK13481.1"/>
    <property type="match status" value="1"/>
</dbReference>
<dbReference type="PANTHER" id="PTHR32282">
    <property type="entry name" value="BINDING PROTEIN TRANSPEPTIDASE, PUTATIVE-RELATED"/>
    <property type="match status" value="1"/>
</dbReference>
<dbReference type="PANTHER" id="PTHR32282:SF11">
    <property type="entry name" value="PENICILLIN-BINDING PROTEIN 1B"/>
    <property type="match status" value="1"/>
</dbReference>
<dbReference type="Pfam" id="PF00912">
    <property type="entry name" value="Transgly"/>
    <property type="match status" value="1"/>
</dbReference>
<dbReference type="SUPFAM" id="SSF53955">
    <property type="entry name" value="Lysozyme-like"/>
    <property type="match status" value="1"/>
</dbReference>
<keyword id="KW-1003">Cell membrane</keyword>
<keyword id="KW-0133">Cell shape</keyword>
<keyword id="KW-0961">Cell wall biogenesis/degradation</keyword>
<keyword id="KW-0328">Glycosyltransferase</keyword>
<keyword id="KW-0472">Membrane</keyword>
<keyword id="KW-0573">Peptidoglycan synthesis</keyword>
<keyword id="KW-0808">Transferase</keyword>
<keyword id="KW-0812">Transmembrane</keyword>
<keyword id="KW-1133">Transmembrane helix</keyword>
<proteinExistence type="inferred from homology"/>
<comment type="function">
    <text evidence="1">Peptidoglycan polymerase that catalyzes glycan chain elongation using lipid-linked disaccharide-pentapeptide as the substrate.</text>
</comment>
<comment type="catalytic activity">
    <reaction evidence="1">
        <text>[GlcNAc-(1-&gt;4)-Mur2Ac(oyl-L-Ala-gamma-D-Glu-L-Lys-D-Ala-D-Ala)](n)-di-trans,octa-cis-undecaprenyl diphosphate + beta-D-GlcNAc-(1-&gt;4)-Mur2Ac(oyl-L-Ala-gamma-D-Glu-L-Lys-D-Ala-D-Ala)-di-trans,octa-cis-undecaprenyl diphosphate = [GlcNAc-(1-&gt;4)-Mur2Ac(oyl-L-Ala-gamma-D-Glu-L-Lys-D-Ala-D-Ala)](n+1)-di-trans,octa-cis-undecaprenyl diphosphate + di-trans,octa-cis-undecaprenyl diphosphate + H(+)</text>
        <dbReference type="Rhea" id="RHEA:23708"/>
        <dbReference type="Rhea" id="RHEA-COMP:9602"/>
        <dbReference type="Rhea" id="RHEA-COMP:9603"/>
        <dbReference type="ChEBI" id="CHEBI:15378"/>
        <dbReference type="ChEBI" id="CHEBI:58405"/>
        <dbReference type="ChEBI" id="CHEBI:60033"/>
        <dbReference type="ChEBI" id="CHEBI:78435"/>
        <dbReference type="EC" id="2.4.99.28"/>
    </reaction>
</comment>
<comment type="pathway">
    <text evidence="1">Cell wall biogenesis; peptidoglycan biosynthesis.</text>
</comment>
<comment type="subcellular location">
    <subcellularLocation>
        <location evidence="1">Cell membrane</location>
        <topology evidence="1">Single-pass membrane protein</topology>
    </subcellularLocation>
</comment>
<comment type="similarity">
    <text evidence="1">Belongs to the glycosyltransferase 51 family.</text>
</comment>
<accession>Q4L7I0</accession>
<protein>
    <recommendedName>
        <fullName evidence="1">Monofunctional glycosyltransferase</fullName>
        <shortName evidence="1">MGT</shortName>
        <ecNumber evidence="1">2.4.99.28</ecNumber>
    </recommendedName>
    <alternativeName>
        <fullName evidence="1">Peptidoglycan TGase</fullName>
    </alternativeName>
</protein>
<feature type="chain" id="PRO_0000083161" description="Monofunctional glycosyltransferase">
    <location>
        <begin position="1"/>
        <end position="270"/>
    </location>
</feature>
<feature type="transmembrane region" description="Helical" evidence="1">
    <location>
        <begin position="42"/>
        <end position="62"/>
    </location>
</feature>
<feature type="region of interest" description="Disordered" evidence="2">
    <location>
        <begin position="1"/>
        <end position="36"/>
    </location>
</feature>
<feature type="compositionally biased region" description="Polar residues" evidence="2">
    <location>
        <begin position="1"/>
        <end position="10"/>
    </location>
</feature>
<feature type="compositionally biased region" description="Basic and acidic residues" evidence="2">
    <location>
        <begin position="11"/>
        <end position="21"/>
    </location>
</feature>
<gene>
    <name evidence="1" type="primary">mgt</name>
    <name type="ordered locus">SH1086</name>
</gene>
<name>MGT_STAHJ</name>